<comment type="function">
    <text evidence="1">Catalyzes the reductive methylation of 2'-deoxyuridine-5'-monophosphate (dUMP) to 2'-deoxythymidine-5'-monophosphate (dTMP) while utilizing 5,10-methylenetetrahydrofolate (mTHF) as the methyl donor and reductant in the reaction, yielding dihydrofolate (DHF) as a by-product. This enzymatic reaction provides an intracellular de novo source of dTMP, an essential precursor for DNA biosynthesis.</text>
</comment>
<comment type="catalytic activity">
    <reaction evidence="1">
        <text>dUMP + (6R)-5,10-methylene-5,6,7,8-tetrahydrofolate = 7,8-dihydrofolate + dTMP</text>
        <dbReference type="Rhea" id="RHEA:12104"/>
        <dbReference type="ChEBI" id="CHEBI:15636"/>
        <dbReference type="ChEBI" id="CHEBI:57451"/>
        <dbReference type="ChEBI" id="CHEBI:63528"/>
        <dbReference type="ChEBI" id="CHEBI:246422"/>
        <dbReference type="EC" id="2.1.1.45"/>
    </reaction>
</comment>
<comment type="pathway">
    <text evidence="1">Pyrimidine metabolism; dTTP biosynthesis.</text>
</comment>
<comment type="subunit">
    <text evidence="1">Homodimer.</text>
</comment>
<comment type="subcellular location">
    <subcellularLocation>
        <location evidence="1">Cytoplasm</location>
    </subcellularLocation>
</comment>
<comment type="similarity">
    <text evidence="1">Belongs to the thymidylate synthase family. Bacterial-type ThyA subfamily.</text>
</comment>
<proteinExistence type="inferred from homology"/>
<feature type="chain" id="PRO_0000321483" description="Thymidylate synthase">
    <location>
        <begin position="1"/>
        <end position="308"/>
    </location>
</feature>
<feature type="active site" description="Nucleophile" evidence="1">
    <location>
        <position position="190"/>
    </location>
</feature>
<feature type="binding site" description="in other chain" evidence="1">
    <location>
        <position position="26"/>
    </location>
    <ligand>
        <name>dUMP</name>
        <dbReference type="ChEBI" id="CHEBI:246422"/>
        <note>ligand shared between dimeric partners</note>
    </ligand>
</feature>
<feature type="binding site" evidence="1">
    <location>
        <begin position="170"/>
        <end position="171"/>
    </location>
    <ligand>
        <name>dUMP</name>
        <dbReference type="ChEBI" id="CHEBI:246422"/>
        <note>ligand shared between dimeric partners</note>
    </ligand>
</feature>
<feature type="binding site" description="in other chain" evidence="1">
    <location>
        <begin position="210"/>
        <end position="213"/>
    </location>
    <ligand>
        <name>dUMP</name>
        <dbReference type="ChEBI" id="CHEBI:246422"/>
        <note>ligand shared between dimeric partners</note>
    </ligand>
</feature>
<feature type="binding site" evidence="1">
    <location>
        <position position="213"/>
    </location>
    <ligand>
        <name>(6R)-5,10-methylene-5,6,7,8-tetrahydrofolate</name>
        <dbReference type="ChEBI" id="CHEBI:15636"/>
    </ligand>
</feature>
<feature type="binding site" description="in other chain" evidence="1">
    <location>
        <position position="221"/>
    </location>
    <ligand>
        <name>dUMP</name>
        <dbReference type="ChEBI" id="CHEBI:246422"/>
        <note>ligand shared between dimeric partners</note>
    </ligand>
</feature>
<feature type="binding site" description="in other chain" evidence="1">
    <location>
        <begin position="251"/>
        <end position="253"/>
    </location>
    <ligand>
        <name>dUMP</name>
        <dbReference type="ChEBI" id="CHEBI:246422"/>
        <note>ligand shared between dimeric partners</note>
    </ligand>
</feature>
<feature type="binding site" evidence="1">
    <location>
        <position position="307"/>
    </location>
    <ligand>
        <name>(6R)-5,10-methylene-5,6,7,8-tetrahydrofolate</name>
        <dbReference type="ChEBI" id="CHEBI:15636"/>
    </ligand>
</feature>
<dbReference type="EC" id="2.1.1.45" evidence="1"/>
<dbReference type="EMBL" id="CP000699">
    <property type="protein sequence ID" value="ABQ70132.1"/>
    <property type="molecule type" value="Genomic_DNA"/>
</dbReference>
<dbReference type="SMR" id="A5VCW6"/>
<dbReference type="STRING" id="392499.Swit_3787"/>
<dbReference type="PaxDb" id="392499-Swit_3787"/>
<dbReference type="KEGG" id="swi:Swit_3787"/>
<dbReference type="eggNOG" id="COG0207">
    <property type="taxonomic scope" value="Bacteria"/>
</dbReference>
<dbReference type="HOGENOM" id="CLU_021669_0_0_5"/>
<dbReference type="OrthoDB" id="9774633at2"/>
<dbReference type="UniPathway" id="UPA00575"/>
<dbReference type="Proteomes" id="UP000001989">
    <property type="component" value="Chromosome"/>
</dbReference>
<dbReference type="GO" id="GO:0005829">
    <property type="term" value="C:cytosol"/>
    <property type="evidence" value="ECO:0007669"/>
    <property type="project" value="TreeGrafter"/>
</dbReference>
<dbReference type="GO" id="GO:0004799">
    <property type="term" value="F:thymidylate synthase activity"/>
    <property type="evidence" value="ECO:0007669"/>
    <property type="project" value="UniProtKB-UniRule"/>
</dbReference>
<dbReference type="GO" id="GO:0006231">
    <property type="term" value="P:dTMP biosynthetic process"/>
    <property type="evidence" value="ECO:0007669"/>
    <property type="project" value="UniProtKB-UniRule"/>
</dbReference>
<dbReference type="GO" id="GO:0006235">
    <property type="term" value="P:dTTP biosynthetic process"/>
    <property type="evidence" value="ECO:0007669"/>
    <property type="project" value="UniProtKB-UniRule"/>
</dbReference>
<dbReference type="GO" id="GO:0032259">
    <property type="term" value="P:methylation"/>
    <property type="evidence" value="ECO:0007669"/>
    <property type="project" value="UniProtKB-KW"/>
</dbReference>
<dbReference type="CDD" id="cd00351">
    <property type="entry name" value="TS_Pyrimidine_HMase"/>
    <property type="match status" value="1"/>
</dbReference>
<dbReference type="Gene3D" id="3.30.572.10">
    <property type="entry name" value="Thymidylate synthase/dCMP hydroxymethylase domain"/>
    <property type="match status" value="1"/>
</dbReference>
<dbReference type="HAMAP" id="MF_00008">
    <property type="entry name" value="Thymidy_synth_bact"/>
    <property type="match status" value="1"/>
</dbReference>
<dbReference type="InterPro" id="IPR045097">
    <property type="entry name" value="Thymidate_synth/dCMP_Mease"/>
</dbReference>
<dbReference type="InterPro" id="IPR023451">
    <property type="entry name" value="Thymidate_synth/dCMP_Mease_dom"/>
</dbReference>
<dbReference type="InterPro" id="IPR036926">
    <property type="entry name" value="Thymidate_synth/dCMP_Mease_sf"/>
</dbReference>
<dbReference type="InterPro" id="IPR000398">
    <property type="entry name" value="Thymidylate_synthase"/>
</dbReference>
<dbReference type="InterPro" id="IPR020940">
    <property type="entry name" value="Thymidylate_synthase_AS"/>
</dbReference>
<dbReference type="NCBIfam" id="TIGR03284">
    <property type="entry name" value="thym_sym"/>
    <property type="match status" value="1"/>
</dbReference>
<dbReference type="PANTHER" id="PTHR11548">
    <property type="entry name" value="THYMIDYLATE SYNTHASE 1"/>
    <property type="match status" value="1"/>
</dbReference>
<dbReference type="PANTHER" id="PTHR11548:SF1">
    <property type="entry name" value="THYMIDYLATE SYNTHASE 1"/>
    <property type="match status" value="1"/>
</dbReference>
<dbReference type="Pfam" id="PF00303">
    <property type="entry name" value="Thymidylat_synt"/>
    <property type="match status" value="1"/>
</dbReference>
<dbReference type="PRINTS" id="PR00108">
    <property type="entry name" value="THYMDSNTHASE"/>
</dbReference>
<dbReference type="SUPFAM" id="SSF55831">
    <property type="entry name" value="Thymidylate synthase/dCMP hydroxymethylase"/>
    <property type="match status" value="1"/>
</dbReference>
<dbReference type="PROSITE" id="PS00091">
    <property type="entry name" value="THYMIDYLATE_SYNTHASE"/>
    <property type="match status" value="1"/>
</dbReference>
<sequence length="308" mass="34966">MTEHPEQQYLDAMARAWYGGDERVDRTGVGTKSLFGVTMRFDLSDGTVPLITTKKIFWKSAIKELIWFLSGDTNIRPLVMQNVHIWTDWPLDKYRKATGEAIDRDAFERRIVDDPAFAAEWGDLGPVYGKQWVDWPRYTPAGDGLFRREEKGVNQIAELVGMLRANPSSRRLIFTGWNVPELPGMALPPCHMTYQYHVAGGRLSGILYQRSCDLGLGFPFNIFEAAVLIRMLAQQADLEPGELVWMGADTHVYSNHGHLVEEQLSRSPRPFPRLSLARKPADMFSYALDDFVIEGYDPHPHIKAEVAV</sequence>
<gene>
    <name evidence="1" type="primary">thyA</name>
    <name type="ordered locus">Swit_3787</name>
</gene>
<accession>A5VCW6</accession>
<keyword id="KW-0963">Cytoplasm</keyword>
<keyword id="KW-0489">Methyltransferase</keyword>
<keyword id="KW-0545">Nucleotide biosynthesis</keyword>
<keyword id="KW-1185">Reference proteome</keyword>
<keyword id="KW-0808">Transferase</keyword>
<protein>
    <recommendedName>
        <fullName evidence="1">Thymidylate synthase</fullName>
        <shortName evidence="1">TS</shortName>
        <shortName evidence="1">TSase</shortName>
        <ecNumber evidence="1">2.1.1.45</ecNumber>
    </recommendedName>
</protein>
<reference key="1">
    <citation type="journal article" date="2010" name="J. Bacteriol.">
        <title>Genome sequence of the dioxin-mineralizing bacterium Sphingomonas wittichii RW1.</title>
        <authorList>
            <person name="Miller T.R."/>
            <person name="Delcher A.L."/>
            <person name="Salzberg S.L."/>
            <person name="Saunders E."/>
            <person name="Detter J.C."/>
            <person name="Halden R.U."/>
        </authorList>
    </citation>
    <scope>NUCLEOTIDE SEQUENCE [LARGE SCALE GENOMIC DNA]</scope>
    <source>
        <strain>DSM 6014 / CCUG 31198 / JCM 15750 / NBRC 105917 / EY 4224 / RW1</strain>
    </source>
</reference>
<evidence type="ECO:0000255" key="1">
    <source>
        <dbReference type="HAMAP-Rule" id="MF_00008"/>
    </source>
</evidence>
<organism>
    <name type="scientific">Rhizorhabdus wittichii (strain DSM 6014 / CCUG 31198 / JCM 15750 / NBRC 105917 / EY 4224 / RW1)</name>
    <name type="common">Sphingomonas wittichii</name>
    <dbReference type="NCBI Taxonomy" id="392499"/>
    <lineage>
        <taxon>Bacteria</taxon>
        <taxon>Pseudomonadati</taxon>
        <taxon>Pseudomonadota</taxon>
        <taxon>Alphaproteobacteria</taxon>
        <taxon>Sphingomonadales</taxon>
        <taxon>Sphingomonadaceae</taxon>
        <taxon>Rhizorhabdus</taxon>
    </lineage>
</organism>
<name>TYSY_RHIWR</name>